<sequence length="567" mass="63010">MKRNISMFLQLLLIILMMISFLFTSLLVPSVSATTLNTISTCLINYKVSNFSVYPTRNHAGNSYYNLLDFSIQNLRFAACSKPKPTVIIVPESKEQLVSSVLCCRQGSYEIRVRCGGHSYEGTSSVSFDGSPFVVIDLMKLDGVSVDVDSETAWVQGGATLGQTYYAISRASNVHGFSAGSCPTVGVGGHISGGGYGFLSRKYGLAADNVVDALLVDAEGRLLDRKAMGEEIFWAIRGGGGGIWGIIYAWKIRLLKVPKTVTSFIIPRPGSKRYVSQLVHKWQLVAPKLEDEFYLSISMSSPSKGNIPIEINAQFSGFYLGTKTEAISILNEAFSELGVLEGDCKEMSWIESTLFFSELDDVANSSDVSRLKERYFENKSYFKAKSDYVKTPISVGGIMTALNVLEKEPNGHVILDPYGGAMQRISEEAIAFPHRKGNLFGIQYLVVWKEKDNNNIVKSNIGYIEWIREFYNTMAPHVSSSPRAAYVNYMDLDLGVMDDYLLPCTSTTASANHAVERARVWGEKYFLNNYDRLVKAKTKIDPLNVFRHQQGIPPLFASMQEYTYSSK</sequence>
<proteinExistence type="evidence at transcript level"/>
<protein>
    <recommendedName>
        <fullName evidence="8">Berberine bridge enzyme-like D-1</fullName>
        <shortName evidence="8">NtBBLd</shortName>
        <ecNumber evidence="2">1.1.1.-</ecNumber>
    </recommendedName>
</protein>
<gene>
    <name evidence="8" type="primary">BBLD</name>
    <name evidence="10" type="ORF">LOC107779537</name>
</gene>
<name>BBLD1_TOBAC</name>
<comment type="function">
    <text evidence="1">Involved in the biosynthesis of pyridine alkaloid natural products, leading mainly to the production of anabasine, anatabine, nicotine and nornicotine, effective deterrents against herbivores with antiparasitic and pesticide properties (neurotoxins); nornicotine serves as the precursor in the synthesis of the carcinogen compound N'-nitrosonornicotine (NNN) (By similarity). Catalyzes a late oxidation step subsequent to the pyridine ring condensation reaction in the biosynthesis of alkaloids (By similarity).</text>
</comment>
<comment type="cofactor">
    <cofactor evidence="1">
        <name>FAD</name>
        <dbReference type="ChEBI" id="CHEBI:57692"/>
    </cofactor>
</comment>
<comment type="pathway">
    <text evidence="1">Alkaloid biosynthesis; nicotine biosynthesis.</text>
</comment>
<comment type="subcellular location">
    <subcellularLocation>
        <location evidence="1">Vacuole</location>
    </subcellularLocation>
</comment>
<comment type="tissue specificity">
    <text evidence="7">Mostly expressed in roots at low levels.</text>
</comment>
<comment type="induction">
    <text evidence="7">By jasmonic acid (MeJA).</text>
</comment>
<comment type="similarity">
    <text evidence="9">Belongs to the oxygen-dependent FAD-linked oxidoreductase family.</text>
</comment>
<evidence type="ECO:0000250" key="1">
    <source>
        <dbReference type="UniProtKB" id="F1T160"/>
    </source>
</evidence>
<evidence type="ECO:0000250" key="2">
    <source>
        <dbReference type="UniProtKB" id="O64743"/>
    </source>
</evidence>
<evidence type="ECO:0000250" key="3">
    <source>
        <dbReference type="UniProtKB" id="Q9FI21"/>
    </source>
</evidence>
<evidence type="ECO:0000255" key="4"/>
<evidence type="ECO:0000255" key="5">
    <source>
        <dbReference type="PROSITE-ProRule" id="PRU00498"/>
    </source>
</evidence>
<evidence type="ECO:0000255" key="6">
    <source>
        <dbReference type="PROSITE-ProRule" id="PRU00718"/>
    </source>
</evidence>
<evidence type="ECO:0000269" key="7">
    <source>
    </source>
</evidence>
<evidence type="ECO:0000303" key="8">
    <source>
    </source>
</evidence>
<evidence type="ECO:0000305" key="9"/>
<evidence type="ECO:0000312" key="10">
    <source>
        <dbReference type="RefSeq" id="XP_016455473.1"/>
    </source>
</evidence>
<feature type="signal peptide" evidence="4">
    <location>
        <begin position="1"/>
        <end position="33"/>
    </location>
</feature>
<feature type="chain" id="PRO_0000455772" description="Berberine bridge enzyme-like D-1">
    <location>
        <begin position="34"/>
        <end position="567"/>
    </location>
</feature>
<feature type="domain" description="FAD-binding PCMH-type" evidence="6">
    <location>
        <begin position="81"/>
        <end position="257"/>
    </location>
</feature>
<feature type="modified residue" description="Pros-8alpha-FAD histidine" evidence="3">
    <location>
        <position position="118"/>
    </location>
</feature>
<feature type="glycosylation site" description="N-linked (GlcNAc...) asparagine" evidence="5">
    <location>
        <position position="50"/>
    </location>
</feature>
<feature type="glycosylation site" description="N-linked (GlcNAc...) asparagine" evidence="5">
    <location>
        <position position="364"/>
    </location>
</feature>
<feature type="glycosylation site" description="N-linked (GlcNAc...) asparagine" evidence="5">
    <location>
        <position position="378"/>
    </location>
</feature>
<feature type="disulfide bond" evidence="2">
    <location>
        <begin position="42"/>
        <end position="103"/>
    </location>
</feature>
<feature type="sequence conflict" description="In Ref. 1; BAK18781." evidence="9" ref="1">
    <original>D</original>
    <variation>N</variation>
    <location>
        <position position="360"/>
    </location>
</feature>
<dbReference type="EC" id="1.1.1.-" evidence="2"/>
<dbReference type="EMBL" id="AB604221">
    <property type="protein sequence ID" value="BAK18781.1"/>
    <property type="molecule type" value="mRNA"/>
</dbReference>
<dbReference type="RefSeq" id="XP_016455473.1">
    <property type="nucleotide sequence ID" value="XM_016599987.1"/>
</dbReference>
<dbReference type="SMR" id="A0A1S3YTK9"/>
<dbReference type="STRING" id="4097.A0A1S3YTK9"/>
<dbReference type="GlyCosmos" id="A0A1S3YTK9">
    <property type="glycosylation" value="3 sites, No reported glycans"/>
</dbReference>
<dbReference type="PaxDb" id="4097-A0A1S3YTK9"/>
<dbReference type="GeneID" id="107779537"/>
<dbReference type="KEGG" id="nta:107779537"/>
<dbReference type="OMA" id="ACKEMSW"/>
<dbReference type="OrthoDB" id="407275at2759"/>
<dbReference type="UniPathway" id="UPA00107"/>
<dbReference type="Proteomes" id="UP000084051">
    <property type="component" value="Unplaced"/>
</dbReference>
<dbReference type="GO" id="GO:0005773">
    <property type="term" value="C:vacuole"/>
    <property type="evidence" value="ECO:0007669"/>
    <property type="project" value="UniProtKB-SubCell"/>
</dbReference>
<dbReference type="GO" id="GO:0071949">
    <property type="term" value="F:FAD binding"/>
    <property type="evidence" value="ECO:0007669"/>
    <property type="project" value="InterPro"/>
</dbReference>
<dbReference type="GO" id="GO:0016491">
    <property type="term" value="F:oxidoreductase activity"/>
    <property type="evidence" value="ECO:0007669"/>
    <property type="project" value="UniProtKB-KW"/>
</dbReference>
<dbReference type="GO" id="GO:0009820">
    <property type="term" value="P:alkaloid metabolic process"/>
    <property type="evidence" value="ECO:0007669"/>
    <property type="project" value="UniProtKB-KW"/>
</dbReference>
<dbReference type="GO" id="GO:0042179">
    <property type="term" value="P:nicotine biosynthetic process"/>
    <property type="evidence" value="ECO:0007669"/>
    <property type="project" value="UniProtKB-UniPathway"/>
</dbReference>
<dbReference type="GO" id="GO:0009753">
    <property type="term" value="P:response to jasmonic acid"/>
    <property type="evidence" value="ECO:0000270"/>
    <property type="project" value="UniProtKB"/>
</dbReference>
<dbReference type="Gene3D" id="3.30.465.10">
    <property type="match status" value="1"/>
</dbReference>
<dbReference type="Gene3D" id="3.40.462.20">
    <property type="match status" value="1"/>
</dbReference>
<dbReference type="Gene3D" id="3.30.43.10">
    <property type="entry name" value="Uridine Diphospho-n-acetylenolpyruvylglucosamine Reductase, domain 2"/>
    <property type="match status" value="1"/>
</dbReference>
<dbReference type="InterPro" id="IPR012951">
    <property type="entry name" value="BBE"/>
</dbReference>
<dbReference type="InterPro" id="IPR016166">
    <property type="entry name" value="FAD-bd_PCMH"/>
</dbReference>
<dbReference type="InterPro" id="IPR036318">
    <property type="entry name" value="FAD-bd_PCMH-like_sf"/>
</dbReference>
<dbReference type="InterPro" id="IPR016167">
    <property type="entry name" value="FAD-bd_PCMH_sub1"/>
</dbReference>
<dbReference type="InterPro" id="IPR016169">
    <property type="entry name" value="FAD-bd_PCMH_sub2"/>
</dbReference>
<dbReference type="InterPro" id="IPR006094">
    <property type="entry name" value="Oxid_FAD_bind_N"/>
</dbReference>
<dbReference type="PANTHER" id="PTHR32448">
    <property type="entry name" value="OS08G0158400 PROTEIN"/>
    <property type="match status" value="1"/>
</dbReference>
<dbReference type="Pfam" id="PF08031">
    <property type="entry name" value="BBE"/>
    <property type="match status" value="1"/>
</dbReference>
<dbReference type="Pfam" id="PF01565">
    <property type="entry name" value="FAD_binding_4"/>
    <property type="match status" value="1"/>
</dbReference>
<dbReference type="SUPFAM" id="SSF56176">
    <property type="entry name" value="FAD-binding/transporter-associated domain-like"/>
    <property type="match status" value="1"/>
</dbReference>
<dbReference type="PROSITE" id="PS51387">
    <property type="entry name" value="FAD_PCMH"/>
    <property type="match status" value="1"/>
</dbReference>
<keyword id="KW-0017">Alkaloid metabolism</keyword>
<keyword id="KW-1015">Disulfide bond</keyword>
<keyword id="KW-0274">FAD</keyword>
<keyword id="KW-0285">Flavoprotein</keyword>
<keyword id="KW-0325">Glycoprotein</keyword>
<keyword id="KW-0560">Oxidoreductase</keyword>
<keyword id="KW-1185">Reference proteome</keyword>
<keyword id="KW-0732">Signal</keyword>
<keyword id="KW-0926">Vacuole</keyword>
<organism>
    <name type="scientific">Nicotiana tabacum</name>
    <name type="common">Common tobacco</name>
    <dbReference type="NCBI Taxonomy" id="4097"/>
    <lineage>
        <taxon>Eukaryota</taxon>
        <taxon>Viridiplantae</taxon>
        <taxon>Streptophyta</taxon>
        <taxon>Embryophyta</taxon>
        <taxon>Tracheophyta</taxon>
        <taxon>Spermatophyta</taxon>
        <taxon>Magnoliopsida</taxon>
        <taxon>eudicotyledons</taxon>
        <taxon>Gunneridae</taxon>
        <taxon>Pentapetalae</taxon>
        <taxon>asterids</taxon>
        <taxon>lamiids</taxon>
        <taxon>Solanales</taxon>
        <taxon>Solanaceae</taxon>
        <taxon>Nicotianoideae</taxon>
        <taxon>Nicotianeae</taxon>
        <taxon>Nicotiana</taxon>
    </lineage>
</organism>
<reference key="1">
    <citation type="journal article" date="2011" name="Plant Physiol.">
        <title>Vacuole-localized berberine bridge enzyme-like proteins are required for a late step of nicotine biosynthesis in tobacco.</title>
        <authorList>
            <person name="Kajikawa M."/>
            <person name="Shoji T."/>
            <person name="Kato A."/>
            <person name="Hashimoto T."/>
        </authorList>
    </citation>
    <scope>NUCLEOTIDE SEQUENCE [MRNA]</scope>
    <scope>TISSUE SPECIFICITY</scope>
    <scope>INDUCTION BY JASMONIC ACID</scope>
    <source>
        <strain>cv. Petit Havana SR1</strain>
    </source>
</reference>
<reference key="2">
    <citation type="journal article" date="2014" name="Nat. Commun.">
        <title>The tobacco genome sequence and its comparison with those of tomato and potato.</title>
        <authorList>
            <person name="Sierro N."/>
            <person name="Battey J.N."/>
            <person name="Ouadi S."/>
            <person name="Bakaher N."/>
            <person name="Bovet L."/>
            <person name="Willig A."/>
            <person name="Goepfert S."/>
            <person name="Peitsch M.C."/>
            <person name="Ivanov N.V."/>
        </authorList>
    </citation>
    <scope>NUCLEOTIDE SEQUENCE [LARGE SCALE GENOMIC DNA]</scope>
    <source>
        <strain>cv. TN90</strain>
    </source>
</reference>
<reference key="3">
    <citation type="journal article" date="2013" name="Phytochemistry">
        <title>Molecular genetics of alkaloid biosynthesis in Nicotiana tabacum.</title>
        <authorList>
            <person name="Dewey R.E."/>
            <person name="Xie J."/>
        </authorList>
    </citation>
    <scope>REVIEW ON ALKALOID BIOSYNTHESIS IN NICOTIANA TABACUM</scope>
</reference>
<reference key="4">
    <citation type="journal article" date="2015" name="Mol. Genet. Genomics">
        <title>Current status and prospects for the study of Nicotiana genomics, genetics, and nicotine biosynthesis genes.</title>
        <authorList>
            <person name="Wang X."/>
            <person name="Bennetzen J.L."/>
        </authorList>
    </citation>
    <scope>REVIEW ON NICOTINE BIOSYNTHESIS</scope>
</reference>
<accession>A0A1S3YTK9</accession>
<accession>F1T162</accession>